<gene>
    <name evidence="1" type="primary">mobA</name>
    <name type="ordered locus">SERP1851</name>
</gene>
<evidence type="ECO:0000255" key="1">
    <source>
        <dbReference type="HAMAP-Rule" id="MF_00316"/>
    </source>
</evidence>
<evidence type="ECO:0000305" key="2"/>
<accession>Q5HLY0</accession>
<feature type="chain" id="PRO_0000134919" description="Probable molybdenum cofactor guanylyltransferase">
    <location>
        <begin position="1"/>
        <end position="201"/>
    </location>
</feature>
<feature type="binding site" evidence="1">
    <location>
        <begin position="6"/>
        <end position="8"/>
    </location>
    <ligand>
        <name>GTP</name>
        <dbReference type="ChEBI" id="CHEBI:37565"/>
    </ligand>
</feature>
<feature type="binding site" evidence="1">
    <location>
        <position position="18"/>
    </location>
    <ligand>
        <name>GTP</name>
        <dbReference type="ChEBI" id="CHEBI:37565"/>
    </ligand>
</feature>
<feature type="binding site" evidence="1">
    <location>
        <position position="65"/>
    </location>
    <ligand>
        <name>GTP</name>
        <dbReference type="ChEBI" id="CHEBI:37565"/>
    </ligand>
</feature>
<feature type="binding site" evidence="1">
    <location>
        <position position="97"/>
    </location>
    <ligand>
        <name>GTP</name>
        <dbReference type="ChEBI" id="CHEBI:37565"/>
    </ligand>
</feature>
<feature type="binding site" evidence="1">
    <location>
        <position position="97"/>
    </location>
    <ligand>
        <name>Mg(2+)</name>
        <dbReference type="ChEBI" id="CHEBI:18420"/>
    </ligand>
</feature>
<reference key="1">
    <citation type="journal article" date="2005" name="J. Bacteriol.">
        <title>Insights on evolution of virulence and resistance from the complete genome analysis of an early methicillin-resistant Staphylococcus aureus strain and a biofilm-producing methicillin-resistant Staphylococcus epidermidis strain.</title>
        <authorList>
            <person name="Gill S.R."/>
            <person name="Fouts D.E."/>
            <person name="Archer G.L."/>
            <person name="Mongodin E.F."/>
            <person name="DeBoy R.T."/>
            <person name="Ravel J."/>
            <person name="Paulsen I.T."/>
            <person name="Kolonay J.F."/>
            <person name="Brinkac L.M."/>
            <person name="Beanan M.J."/>
            <person name="Dodson R.J."/>
            <person name="Daugherty S.C."/>
            <person name="Madupu R."/>
            <person name="Angiuoli S.V."/>
            <person name="Durkin A.S."/>
            <person name="Haft D.H."/>
            <person name="Vamathevan J.J."/>
            <person name="Khouri H."/>
            <person name="Utterback T.R."/>
            <person name="Lee C."/>
            <person name="Dimitrov G."/>
            <person name="Jiang L."/>
            <person name="Qin H."/>
            <person name="Weidman J."/>
            <person name="Tran K."/>
            <person name="Kang K.H."/>
            <person name="Hance I.R."/>
            <person name="Nelson K.E."/>
            <person name="Fraser C.M."/>
        </authorList>
    </citation>
    <scope>NUCLEOTIDE SEQUENCE [LARGE SCALE GENOMIC DNA]</scope>
    <source>
        <strain>ATCC 35984 / DSM 28319 / BCRC 17069 / CCUG 31568 / BM 3577 / RP62A</strain>
    </source>
</reference>
<keyword id="KW-0963">Cytoplasm</keyword>
<keyword id="KW-0342">GTP-binding</keyword>
<keyword id="KW-0460">Magnesium</keyword>
<keyword id="KW-0479">Metal-binding</keyword>
<keyword id="KW-0501">Molybdenum cofactor biosynthesis</keyword>
<keyword id="KW-0547">Nucleotide-binding</keyword>
<keyword id="KW-1185">Reference proteome</keyword>
<keyword id="KW-0808">Transferase</keyword>
<name>MOBA_STAEQ</name>
<proteinExistence type="inferred from homology"/>
<dbReference type="EC" id="2.7.7.77" evidence="1"/>
<dbReference type="EMBL" id="CP000029">
    <property type="protein sequence ID" value="AAW55203.1"/>
    <property type="status" value="ALT_INIT"/>
    <property type="molecule type" value="Genomic_DNA"/>
</dbReference>
<dbReference type="RefSeq" id="WP_001832403.1">
    <property type="nucleotide sequence ID" value="NC_002976.3"/>
</dbReference>
<dbReference type="SMR" id="Q5HLY0"/>
<dbReference type="STRING" id="176279.SERP1851"/>
<dbReference type="GeneID" id="50018054"/>
<dbReference type="KEGG" id="ser:SERP1851"/>
<dbReference type="eggNOG" id="COG0746">
    <property type="taxonomic scope" value="Bacteria"/>
</dbReference>
<dbReference type="HOGENOM" id="CLU_055597_2_0_9"/>
<dbReference type="Proteomes" id="UP000000531">
    <property type="component" value="Chromosome"/>
</dbReference>
<dbReference type="GO" id="GO:0005737">
    <property type="term" value="C:cytoplasm"/>
    <property type="evidence" value="ECO:0007669"/>
    <property type="project" value="UniProtKB-SubCell"/>
</dbReference>
<dbReference type="GO" id="GO:0005525">
    <property type="term" value="F:GTP binding"/>
    <property type="evidence" value="ECO:0007669"/>
    <property type="project" value="UniProtKB-UniRule"/>
</dbReference>
<dbReference type="GO" id="GO:0046872">
    <property type="term" value="F:metal ion binding"/>
    <property type="evidence" value="ECO:0007669"/>
    <property type="project" value="UniProtKB-KW"/>
</dbReference>
<dbReference type="GO" id="GO:0061603">
    <property type="term" value="F:molybdenum cofactor guanylyltransferase activity"/>
    <property type="evidence" value="ECO:0007669"/>
    <property type="project" value="UniProtKB-EC"/>
</dbReference>
<dbReference type="GO" id="GO:0006777">
    <property type="term" value="P:Mo-molybdopterin cofactor biosynthetic process"/>
    <property type="evidence" value="ECO:0007669"/>
    <property type="project" value="UniProtKB-KW"/>
</dbReference>
<dbReference type="CDD" id="cd02503">
    <property type="entry name" value="MobA"/>
    <property type="match status" value="1"/>
</dbReference>
<dbReference type="Gene3D" id="3.90.550.10">
    <property type="entry name" value="Spore Coat Polysaccharide Biosynthesis Protein SpsA, Chain A"/>
    <property type="match status" value="1"/>
</dbReference>
<dbReference type="HAMAP" id="MF_00316">
    <property type="entry name" value="MobA"/>
    <property type="match status" value="1"/>
</dbReference>
<dbReference type="InterPro" id="IPR025877">
    <property type="entry name" value="MobA-like_NTP_Trfase"/>
</dbReference>
<dbReference type="InterPro" id="IPR013482">
    <property type="entry name" value="Molybde_CF_guanTrfase"/>
</dbReference>
<dbReference type="InterPro" id="IPR029044">
    <property type="entry name" value="Nucleotide-diphossugar_trans"/>
</dbReference>
<dbReference type="NCBIfam" id="NF001457">
    <property type="entry name" value="PRK00317.1-3"/>
    <property type="match status" value="1"/>
</dbReference>
<dbReference type="PANTHER" id="PTHR19136">
    <property type="entry name" value="MOLYBDENUM COFACTOR GUANYLYLTRANSFERASE"/>
    <property type="match status" value="1"/>
</dbReference>
<dbReference type="PANTHER" id="PTHR19136:SF81">
    <property type="entry name" value="MOLYBDENUM COFACTOR GUANYLYLTRANSFERASE"/>
    <property type="match status" value="1"/>
</dbReference>
<dbReference type="Pfam" id="PF12804">
    <property type="entry name" value="NTP_transf_3"/>
    <property type="match status" value="1"/>
</dbReference>
<dbReference type="SUPFAM" id="SSF53448">
    <property type="entry name" value="Nucleotide-diphospho-sugar transferases"/>
    <property type="match status" value="1"/>
</dbReference>
<organism>
    <name type="scientific">Staphylococcus epidermidis (strain ATCC 35984 / DSM 28319 / BCRC 17069 / CCUG 31568 / BM 3577 / RP62A)</name>
    <dbReference type="NCBI Taxonomy" id="176279"/>
    <lineage>
        <taxon>Bacteria</taxon>
        <taxon>Bacillati</taxon>
        <taxon>Bacillota</taxon>
        <taxon>Bacilli</taxon>
        <taxon>Bacillales</taxon>
        <taxon>Staphylococcaceae</taxon>
        <taxon>Staphylococcus</taxon>
    </lineage>
</organism>
<sequence length="201" mass="23315">MKAIILAGGESSRFGKAKAFAKIDNQYFYQKIIETLKSTNMFNRIIISTNSQLASQFEYEYVIIDDEHHQNKGPLTGIYSVMKQYMDEELFFIVSVDTPMITSKAVNGLYHFMVSNLIESRLDIVAFKEGEICIPTIGFYTLSTFPFIEKALNSNHLSLKHVFKQLSTDWLDVTEIDSPYYWYKNINFQHDLDSLKMQINE</sequence>
<comment type="function">
    <text evidence="1">Transfers a GMP moiety from GTP to Mo-molybdopterin (Mo-MPT) cofactor (Moco or molybdenum cofactor) to form Mo-molybdopterin guanine dinucleotide (Mo-MGD) cofactor.</text>
</comment>
<comment type="catalytic activity">
    <reaction evidence="1">
        <text>Mo-molybdopterin + GTP + H(+) = Mo-molybdopterin guanine dinucleotide + diphosphate</text>
        <dbReference type="Rhea" id="RHEA:34243"/>
        <dbReference type="ChEBI" id="CHEBI:15378"/>
        <dbReference type="ChEBI" id="CHEBI:33019"/>
        <dbReference type="ChEBI" id="CHEBI:37565"/>
        <dbReference type="ChEBI" id="CHEBI:71302"/>
        <dbReference type="ChEBI" id="CHEBI:71310"/>
        <dbReference type="EC" id="2.7.7.77"/>
    </reaction>
</comment>
<comment type="cofactor">
    <cofactor evidence="1">
        <name>Mg(2+)</name>
        <dbReference type="ChEBI" id="CHEBI:18420"/>
    </cofactor>
</comment>
<comment type="subcellular location">
    <subcellularLocation>
        <location evidence="1">Cytoplasm</location>
    </subcellularLocation>
</comment>
<comment type="domain">
    <text evidence="1">The N-terminal domain determines nucleotide recognition and specific binding, while the C-terminal domain determines the specific binding to the target protein.</text>
</comment>
<comment type="similarity">
    <text evidence="1">Belongs to the MobA family.</text>
</comment>
<comment type="sequence caution" evidence="2">
    <conflict type="erroneous initiation">
        <sequence resource="EMBL-CDS" id="AAW55203"/>
    </conflict>
</comment>
<protein>
    <recommendedName>
        <fullName evidence="1">Probable molybdenum cofactor guanylyltransferase</fullName>
        <shortName evidence="1">MoCo guanylyltransferase</shortName>
        <ecNumber evidence="1">2.7.7.77</ecNumber>
    </recommendedName>
    <alternativeName>
        <fullName evidence="1">GTP:molybdopterin guanylyltransferase</fullName>
    </alternativeName>
    <alternativeName>
        <fullName evidence="1">Mo-MPT guanylyltransferase</fullName>
    </alternativeName>
    <alternativeName>
        <fullName evidence="1">Molybdopterin guanylyltransferase</fullName>
    </alternativeName>
    <alternativeName>
        <fullName evidence="1">Molybdopterin-guanine dinucleotide synthase</fullName>
        <shortName evidence="1">MGD synthase</shortName>
    </alternativeName>
</protein>